<proteinExistence type="inferred from homology"/>
<keyword id="KW-0520">NAD</keyword>
<keyword id="KW-0560">Oxidoreductase</keyword>
<keyword id="KW-1185">Reference proteome</keyword>
<comment type="function">
    <text evidence="1">Catalyzes the NAD(H)-dependent interconversion of D-fructose 6-phosphate and D-mannitol 1-phosphate in the mannitol metabolic pathway.</text>
</comment>
<comment type="catalytic activity">
    <reaction>
        <text>D-mannitol 1-phosphate + NAD(+) = beta-D-fructose 6-phosphate + NADH + H(+)</text>
        <dbReference type="Rhea" id="RHEA:19661"/>
        <dbReference type="ChEBI" id="CHEBI:15378"/>
        <dbReference type="ChEBI" id="CHEBI:57540"/>
        <dbReference type="ChEBI" id="CHEBI:57634"/>
        <dbReference type="ChEBI" id="CHEBI:57945"/>
        <dbReference type="ChEBI" id="CHEBI:61381"/>
        <dbReference type="EC" id="1.1.1.17"/>
    </reaction>
</comment>
<comment type="subunit">
    <text evidence="1">Monomer.</text>
</comment>
<comment type="similarity">
    <text evidence="2">Belongs to the mannitol dehydrogenase family.</text>
</comment>
<gene>
    <name type="primary">mpdA</name>
    <name type="ORF">ACLA_069650</name>
</gene>
<dbReference type="EC" id="1.1.1.17"/>
<dbReference type="EMBL" id="DS027045">
    <property type="protein sequence ID" value="EAW13935.1"/>
    <property type="molecule type" value="Genomic_DNA"/>
</dbReference>
<dbReference type="RefSeq" id="XP_001275361.1">
    <property type="nucleotide sequence ID" value="XM_001275360.1"/>
</dbReference>
<dbReference type="SMR" id="A1C6B4"/>
<dbReference type="STRING" id="344612.A1C6B4"/>
<dbReference type="EnsemblFungi" id="EAW13935">
    <property type="protein sequence ID" value="EAW13935"/>
    <property type="gene ID" value="ACLA_069650"/>
</dbReference>
<dbReference type="GeneID" id="4707562"/>
<dbReference type="KEGG" id="act:ACLA_069650"/>
<dbReference type="VEuPathDB" id="FungiDB:ACLA_069650"/>
<dbReference type="eggNOG" id="ENOG502QVPN">
    <property type="taxonomic scope" value="Eukaryota"/>
</dbReference>
<dbReference type="HOGENOM" id="CLU_036089_0_1_1"/>
<dbReference type="OMA" id="APFIERK"/>
<dbReference type="OrthoDB" id="418169at2759"/>
<dbReference type="Proteomes" id="UP000006701">
    <property type="component" value="Unassembled WGS sequence"/>
</dbReference>
<dbReference type="GO" id="GO:0005829">
    <property type="term" value="C:cytosol"/>
    <property type="evidence" value="ECO:0007669"/>
    <property type="project" value="TreeGrafter"/>
</dbReference>
<dbReference type="GO" id="GO:0008926">
    <property type="term" value="F:mannitol-1-phosphate 5-dehydrogenase activity"/>
    <property type="evidence" value="ECO:0007669"/>
    <property type="project" value="UniProtKB-EC"/>
</dbReference>
<dbReference type="GO" id="GO:0019592">
    <property type="term" value="P:mannitol catabolic process"/>
    <property type="evidence" value="ECO:0007669"/>
    <property type="project" value="TreeGrafter"/>
</dbReference>
<dbReference type="FunFam" id="1.10.1040.10:FF:000009">
    <property type="entry name" value="Mannitol-1-phosphate 5-dehydrogenase"/>
    <property type="match status" value="1"/>
</dbReference>
<dbReference type="FunFam" id="3.40.50.720:FF:000316">
    <property type="entry name" value="Mannitol-1-phosphate 5-dehydrogenase"/>
    <property type="match status" value="1"/>
</dbReference>
<dbReference type="Gene3D" id="1.10.1040.10">
    <property type="entry name" value="N-(1-d-carboxylethyl)-l-norvaline Dehydrogenase, domain 2"/>
    <property type="match status" value="1"/>
</dbReference>
<dbReference type="Gene3D" id="3.40.50.720">
    <property type="entry name" value="NAD(P)-binding Rossmann-like Domain"/>
    <property type="match status" value="1"/>
</dbReference>
<dbReference type="HAMAP" id="MF_00196">
    <property type="entry name" value="Mannitol_dehydrog"/>
    <property type="match status" value="1"/>
</dbReference>
<dbReference type="InterPro" id="IPR008927">
    <property type="entry name" value="6-PGluconate_DH-like_C_sf"/>
</dbReference>
<dbReference type="InterPro" id="IPR013328">
    <property type="entry name" value="6PGD_dom2"/>
</dbReference>
<dbReference type="InterPro" id="IPR023028">
    <property type="entry name" value="Mannitol_1_phos_5_DH"/>
</dbReference>
<dbReference type="InterPro" id="IPR000669">
    <property type="entry name" value="Mannitol_DH"/>
</dbReference>
<dbReference type="InterPro" id="IPR013118">
    <property type="entry name" value="Mannitol_DH_C"/>
</dbReference>
<dbReference type="InterPro" id="IPR013131">
    <property type="entry name" value="Mannitol_DH_N"/>
</dbReference>
<dbReference type="InterPro" id="IPR036291">
    <property type="entry name" value="NAD(P)-bd_dom_sf"/>
</dbReference>
<dbReference type="NCBIfam" id="NF002647">
    <property type="entry name" value="PRK02318.1-3"/>
    <property type="match status" value="1"/>
</dbReference>
<dbReference type="NCBIfam" id="NF002652">
    <property type="entry name" value="PRK02318.2-5"/>
    <property type="match status" value="1"/>
</dbReference>
<dbReference type="PANTHER" id="PTHR30524:SF0">
    <property type="entry name" value="ALTRONATE OXIDOREDUCTASE-RELATED"/>
    <property type="match status" value="1"/>
</dbReference>
<dbReference type="PANTHER" id="PTHR30524">
    <property type="entry name" value="MANNITOL-1-PHOSPHATE 5-DEHYDROGENASE"/>
    <property type="match status" value="1"/>
</dbReference>
<dbReference type="Pfam" id="PF01232">
    <property type="entry name" value="Mannitol_dh"/>
    <property type="match status" value="1"/>
</dbReference>
<dbReference type="Pfam" id="PF08125">
    <property type="entry name" value="Mannitol_dh_C"/>
    <property type="match status" value="1"/>
</dbReference>
<dbReference type="PRINTS" id="PR00084">
    <property type="entry name" value="MTLDHDRGNASE"/>
</dbReference>
<dbReference type="SUPFAM" id="SSF48179">
    <property type="entry name" value="6-phosphogluconate dehydrogenase C-terminal domain-like"/>
    <property type="match status" value="1"/>
</dbReference>
<dbReference type="SUPFAM" id="SSF51735">
    <property type="entry name" value="NAD(P)-binding Rossmann-fold domains"/>
    <property type="match status" value="1"/>
</dbReference>
<organism>
    <name type="scientific">Aspergillus clavatus (strain ATCC 1007 / CBS 513.65 / DSM 816 / NCTC 3887 / NRRL 1 / QM 1276 / 107)</name>
    <dbReference type="NCBI Taxonomy" id="344612"/>
    <lineage>
        <taxon>Eukaryota</taxon>
        <taxon>Fungi</taxon>
        <taxon>Dikarya</taxon>
        <taxon>Ascomycota</taxon>
        <taxon>Pezizomycotina</taxon>
        <taxon>Eurotiomycetes</taxon>
        <taxon>Eurotiomycetidae</taxon>
        <taxon>Eurotiales</taxon>
        <taxon>Aspergillaceae</taxon>
        <taxon>Aspergillus</taxon>
        <taxon>Aspergillus subgen. Fumigati</taxon>
    </lineage>
</organism>
<reference key="1">
    <citation type="journal article" date="2008" name="PLoS Genet.">
        <title>Genomic islands in the pathogenic filamentous fungus Aspergillus fumigatus.</title>
        <authorList>
            <person name="Fedorova N.D."/>
            <person name="Khaldi N."/>
            <person name="Joardar V.S."/>
            <person name="Maiti R."/>
            <person name="Amedeo P."/>
            <person name="Anderson M.J."/>
            <person name="Crabtree J."/>
            <person name="Silva J.C."/>
            <person name="Badger J.H."/>
            <person name="Albarraq A."/>
            <person name="Angiuoli S."/>
            <person name="Bussey H."/>
            <person name="Bowyer P."/>
            <person name="Cotty P.J."/>
            <person name="Dyer P.S."/>
            <person name="Egan A."/>
            <person name="Galens K."/>
            <person name="Fraser-Liggett C.M."/>
            <person name="Haas B.J."/>
            <person name="Inman J.M."/>
            <person name="Kent R."/>
            <person name="Lemieux S."/>
            <person name="Malavazi I."/>
            <person name="Orvis J."/>
            <person name="Roemer T."/>
            <person name="Ronning C.M."/>
            <person name="Sundaram J.P."/>
            <person name="Sutton G."/>
            <person name="Turner G."/>
            <person name="Venter J.C."/>
            <person name="White O.R."/>
            <person name="Whitty B.R."/>
            <person name="Youngman P."/>
            <person name="Wolfe K.H."/>
            <person name="Goldman G.H."/>
            <person name="Wortman J.R."/>
            <person name="Jiang B."/>
            <person name="Denning D.W."/>
            <person name="Nierman W.C."/>
        </authorList>
    </citation>
    <scope>NUCLEOTIDE SEQUENCE [LARGE SCALE GENOMIC DNA]</scope>
    <source>
        <strain>ATCC 1007 / CBS 513.65 / DSM 816 / NCTC 3887 / NRRL 1 / QM 1276 / 107</strain>
    </source>
</reference>
<accession>A1C6B4</accession>
<sequence length="388" mass="42661">MGKKAIQFGGGNIGRGFVAEFLHEAGYEVVFVDVMDKIIDALTSNPSYQVTEVSDEGERTKTITNYSAINSKTHESEVVQEIATADVVTCAVGPNILKFIAPVIAKGIDARTASKPLAVIACENAIGATDTLHGFIKQNTDESRLSTMGERAQFANSAIDRIVPNQPAGEGLNVRIEKFYEWVVEKTPFGSVGHPDIPAIHWVDHLEPYIERKLFTVNTGHATTAYYGYQRGKKMIAEALADPEIRQIVHQVLEETASLIVAKHEISEEEQKEYVNTIISRISNPYLEDNVERVGRAPLRKLSRKERFIGPAAQLAEKGMKYDALLGSVEMALRFQNVPGDEESVELAKILNEMSADDATAKLTGLEKSHPLYQPVQNVVAKVQKGGK</sequence>
<evidence type="ECO:0000250" key="1"/>
<evidence type="ECO:0000305" key="2"/>
<name>MTLD_ASPCL</name>
<feature type="chain" id="PRO_0000371518" description="Mannitol-1-phosphate 5-dehydrogenase">
    <location>
        <begin position="1"/>
        <end position="388"/>
    </location>
</feature>
<feature type="active site" evidence="1">
    <location>
        <position position="213"/>
    </location>
</feature>
<feature type="binding site" evidence="1">
    <location>
        <begin position="5"/>
        <end position="16"/>
    </location>
    <ligand>
        <name>NAD(+)</name>
        <dbReference type="ChEBI" id="CHEBI:57540"/>
    </ligand>
</feature>
<protein>
    <recommendedName>
        <fullName>Mannitol-1-phosphate 5-dehydrogenase</fullName>
        <shortName>M1PDH</shortName>
        <shortName>MPD</shortName>
        <shortName>MPDH</shortName>
        <ecNumber>1.1.1.17</ecNumber>
    </recommendedName>
</protein>